<name>CLDS3_SALSC</name>
<gene>
    <name evidence="8" type="primary">LPS</name>
    <name evidence="7" type="synonym">TPS1</name>
    <name evidence="8" type="synonym">TPSSA3</name>
</gene>
<keyword id="KW-0150">Chloroplast</keyword>
<keyword id="KW-0456">Lyase</keyword>
<keyword id="KW-0460">Magnesium</keyword>
<keyword id="KW-0479">Metal-binding</keyword>
<keyword id="KW-0934">Plastid</keyword>
<keyword id="KW-0809">Transit peptide</keyword>
<organism>
    <name type="scientific">Salvia sclarea</name>
    <name type="common">Clary sage</name>
    <dbReference type="NCBI Taxonomy" id="38869"/>
    <lineage>
        <taxon>Eukaryota</taxon>
        <taxon>Viridiplantae</taxon>
        <taxon>Streptophyta</taxon>
        <taxon>Embryophyta</taxon>
        <taxon>Tracheophyta</taxon>
        <taxon>Spermatophyta</taxon>
        <taxon>Magnoliopsida</taxon>
        <taxon>eudicotyledons</taxon>
        <taxon>Gunneridae</taxon>
        <taxon>Pentapetalae</taxon>
        <taxon>asterids</taxon>
        <taxon>lamiids</taxon>
        <taxon>Lamiales</taxon>
        <taxon>Lamiaceae</taxon>
        <taxon>Nepetoideae</taxon>
        <taxon>Mentheae</taxon>
        <taxon>Salviinae</taxon>
        <taxon>Salvia</taxon>
        <taxon>Salvia incertae sedis</taxon>
    </lineage>
</organism>
<protein>
    <recommendedName>
        <fullName evidence="10">Copal-8-ol diphosphate hydratase TPSSA3, chloroplastic</fullName>
        <shortName evidence="10">8-hydroxycopalyl diphosphate synthase</shortName>
        <ecNumber evidence="5 6">4.2.1.133</ecNumber>
    </recommendedName>
    <alternativeName>
        <fullName evidence="8">13-labden-8,15-diol pyrophosphate synthase TPSSA3</fullName>
        <shortName evidence="8">SsLPS</shortName>
    </alternativeName>
    <alternativeName>
        <fullName evidence="7">Diterpene synthase 1, chloroplastic</fullName>
        <shortName evidence="7">SscTPS1</shortName>
    </alternativeName>
    <alternativeName>
        <fullName evidence="8">Diterpene synthase Sa3</fullName>
        <shortName evidence="8">SsTpsSa3</shortName>
    </alternativeName>
</protein>
<feature type="transit peptide" description="Chloroplast" evidence="4">
    <location>
        <begin position="1"/>
        <end status="unknown"/>
    </location>
</feature>
<feature type="chain" id="PRO_0000448857" description="Copal-8-ol diphosphate hydratase TPSSA3, chloroplastic">
    <location>
        <begin status="unknown"/>
        <end position="785"/>
    </location>
</feature>
<feature type="short sequence motif" description="DXDD motif" evidence="10">
    <location>
        <begin position="372"/>
        <end position="375"/>
    </location>
</feature>
<feature type="binding site" evidence="3">
    <location>
        <position position="240"/>
    </location>
    <ligand>
        <name>substrate</name>
    </ligand>
</feature>
<feature type="binding site" evidence="1">
    <location>
        <position position="372"/>
    </location>
    <ligand>
        <name>Mg(2+)</name>
        <dbReference type="ChEBI" id="CHEBI:18420"/>
    </ligand>
</feature>
<feature type="binding site" evidence="1">
    <location>
        <position position="374"/>
    </location>
    <ligand>
        <name>Mg(2+)</name>
        <dbReference type="ChEBI" id="CHEBI:18420"/>
    </ligand>
</feature>
<feature type="binding site" evidence="3">
    <location>
        <position position="459"/>
    </location>
    <ligand>
        <name>substrate</name>
    </ligand>
</feature>
<feature type="sequence conflict" description="In Ref. 2; ADW66454." evidence="10" ref="2">
    <original>N</original>
    <variation>K</variation>
    <location>
        <position position="596"/>
    </location>
</feature>
<feature type="sequence conflict" description="In Ref. 2; ADW66454." evidence="10" ref="2">
    <original>E</original>
    <variation>D</variation>
    <location>
        <position position="667"/>
    </location>
</feature>
<feature type="sequence conflict" description="In Ref. 2; ADW66454." evidence="10" ref="2">
    <original>LANT</original>
    <variation>QANA</variation>
    <location>
        <begin position="672"/>
        <end position="675"/>
    </location>
</feature>
<proteinExistence type="evidence at protein level"/>
<comment type="function">
    <text evidence="5 6 11 12 13">Involved in the biosynthesis of labdane-type diterpenoid including sclareol, a diterpene-diol that is used as fragrance and flavoring, and has anticancer effects (able to kill leukemic and colon cancer cells by apoptosis) (Probable). Sclareol can also be used as synthesis precursor of ambergris substitution fragance products such as ambrox (Probable). Terpene synthase that produces 8-hydroxycopalyl diphosphate from geranylgeranyl diphosphate (GGPP) (PubMed:22959531, PubMed:23113661).</text>
</comment>
<comment type="catalytic activity">
    <reaction evidence="5 6">
        <text>(2E,6E,10E)-geranylgeranyl diphosphate + H2O = 8-hydroxycopalyl diphosphate</text>
        <dbReference type="Rhea" id="RHEA:32703"/>
        <dbReference type="ChEBI" id="CHEBI:15377"/>
        <dbReference type="ChEBI" id="CHEBI:58756"/>
        <dbReference type="ChEBI" id="CHEBI:64283"/>
        <dbReference type="EC" id="4.2.1.133"/>
    </reaction>
    <physiologicalReaction direction="left-to-right" evidence="5 6">
        <dbReference type="Rhea" id="RHEA:32704"/>
    </physiologicalReaction>
</comment>
<comment type="cofactor">
    <cofactor evidence="3">
        <name>Mg(2+)</name>
        <dbReference type="ChEBI" id="CHEBI:18420"/>
    </cofactor>
</comment>
<comment type="pathway">
    <text evidence="5 6 9">Secondary metabolite biosynthesis; terpenoid biosynthesis.</text>
</comment>
<comment type="subcellular location">
    <subcellularLocation>
        <location evidence="2">Plastid</location>
        <location evidence="2">Chloroplast</location>
    </subcellularLocation>
</comment>
<comment type="domain">
    <text evidence="10">The Asp-Xaa-Asp-Asp (DXDD) motif is important for the catalytic activity, presumably through binding to Mg(2+).</text>
</comment>
<comment type="biotechnology">
    <text evidence="6">Escherichia coli expressing SsLPS and SsSCS from Salvia sclarea and CrtE from Pantoea agglomerans can produce sclareol in high-cell-density fermentation conditions, thus being an alternative, sustainable, and cost-efficient route to sclareol and other diterpene analogs.</text>
</comment>
<comment type="similarity">
    <text evidence="10">Belongs to the terpene synthase family.</text>
</comment>
<dbReference type="EC" id="4.2.1.133" evidence="5 6"/>
<dbReference type="EMBL" id="JN133923">
    <property type="protein sequence ID" value="AET21247.1"/>
    <property type="molecule type" value="mRNA"/>
</dbReference>
<dbReference type="EMBL" id="HQ641451">
    <property type="protein sequence ID" value="ADW66454.1"/>
    <property type="molecule type" value="mRNA"/>
</dbReference>
<dbReference type="SMR" id="G8GJ95"/>
<dbReference type="BRENDA" id="4.2.3.133">
    <property type="organism ID" value="13177"/>
</dbReference>
<dbReference type="UniPathway" id="UPA00213"/>
<dbReference type="GO" id="GO:0009507">
    <property type="term" value="C:chloroplast"/>
    <property type="evidence" value="ECO:0000250"/>
    <property type="project" value="UniProtKB"/>
</dbReference>
<dbReference type="GO" id="GO:0102161">
    <property type="term" value="F:copal-8-ol diphosphate synthase activity"/>
    <property type="evidence" value="ECO:0000314"/>
    <property type="project" value="UniProtKB"/>
</dbReference>
<dbReference type="GO" id="GO:0000287">
    <property type="term" value="F:magnesium ion binding"/>
    <property type="evidence" value="ECO:0007669"/>
    <property type="project" value="TreeGrafter"/>
</dbReference>
<dbReference type="GO" id="GO:0010333">
    <property type="term" value="F:terpene synthase activity"/>
    <property type="evidence" value="ECO:0007669"/>
    <property type="project" value="InterPro"/>
</dbReference>
<dbReference type="GO" id="GO:0016102">
    <property type="term" value="P:diterpenoid biosynthetic process"/>
    <property type="evidence" value="ECO:0000314"/>
    <property type="project" value="UniProtKB"/>
</dbReference>
<dbReference type="GO" id="GO:0009686">
    <property type="term" value="P:gibberellin biosynthetic process"/>
    <property type="evidence" value="ECO:0007669"/>
    <property type="project" value="TreeGrafter"/>
</dbReference>
<dbReference type="FunFam" id="1.50.10.130:FF:000002">
    <property type="entry name" value="Ent-copalyl diphosphate synthase, chloroplastic"/>
    <property type="match status" value="1"/>
</dbReference>
<dbReference type="Gene3D" id="1.50.10.160">
    <property type="match status" value="1"/>
</dbReference>
<dbReference type="Gene3D" id="1.10.600.10">
    <property type="entry name" value="Farnesyl Diphosphate Synthase"/>
    <property type="match status" value="1"/>
</dbReference>
<dbReference type="Gene3D" id="1.50.10.130">
    <property type="entry name" value="Terpene synthase, N-terminal domain"/>
    <property type="match status" value="1"/>
</dbReference>
<dbReference type="InterPro" id="IPR008949">
    <property type="entry name" value="Isoprenoid_synthase_dom_sf"/>
</dbReference>
<dbReference type="InterPro" id="IPR001906">
    <property type="entry name" value="Terpene_synth_N"/>
</dbReference>
<dbReference type="InterPro" id="IPR036965">
    <property type="entry name" value="Terpene_synth_N_sf"/>
</dbReference>
<dbReference type="InterPro" id="IPR050148">
    <property type="entry name" value="Terpene_synthase-like"/>
</dbReference>
<dbReference type="InterPro" id="IPR008930">
    <property type="entry name" value="Terpenoid_cyclase/PrenylTrfase"/>
</dbReference>
<dbReference type="PANTHER" id="PTHR31739:SF30">
    <property type="entry name" value="COPAL-8-OL DIPHOSPHATE HYDRATASE, CHLOROPLASTIC"/>
    <property type="match status" value="1"/>
</dbReference>
<dbReference type="PANTHER" id="PTHR31739">
    <property type="entry name" value="ENT-COPALYL DIPHOSPHATE SYNTHASE, CHLOROPLASTIC"/>
    <property type="match status" value="1"/>
</dbReference>
<dbReference type="Pfam" id="PF01397">
    <property type="entry name" value="Terpene_synth"/>
    <property type="match status" value="1"/>
</dbReference>
<dbReference type="SFLD" id="SFLDG01014">
    <property type="entry name" value="Terpene_Cyclase_Like_1_N-term"/>
    <property type="match status" value="1"/>
</dbReference>
<dbReference type="SFLD" id="SFLDG01605">
    <property type="entry name" value="Terpene_Cyclase_Like_1_N-term"/>
    <property type="match status" value="1"/>
</dbReference>
<dbReference type="SUPFAM" id="SSF48239">
    <property type="entry name" value="Terpenoid cyclases/Protein prenyltransferases"/>
    <property type="match status" value="2"/>
</dbReference>
<dbReference type="SUPFAM" id="SSF48576">
    <property type="entry name" value="Terpenoid synthases"/>
    <property type="match status" value="1"/>
</dbReference>
<sequence>MTSVNLSRAPAAITRRRLQLQPEFHAECSWLKSSSKHAPLTLSCQIRPKQLSQIAELRVTSLDASQASEKDISLVQTPHKVEVNEKIEESIEYVQNLLMTSGDGRISVSPYDTAVIALIKDLKGRDAPQFPSCLEWIAHHQLADGSWGDEFFCIYDRILNTLACVVALKSWNLHSDIIEKGVTYIKENVHKLKGANVEHRTAGFELVVPTFMQMATDLGIQDLPYDHPLIKEIADTKQQRLKEIPKDLVYQMPTNLLYSLEGLGDLEWERLLKLQSGNGSFLTSPSSTAAVLMHTKDEKCLKYIENALKNCDGGAPHTYPVDIFSRLWAIDRLQRLGISRFFQHEIKYFLDHIESVWEETGVFSGRYTKFSDIDDTSMGVRLLKMHGYDVDPNVLKHFKQQDGKFSCYIGQSVESASPMYNLYRAAQLRFPGEEVLEEATKFAFNFLQEMLVKDRLQERWVISDHLFDEIKLGLKMPWYATLPRVEAAYYLDHYAGSGDVWIGKSFYRMPEISNDTYKELAILDFNRCQTQHQLEWIHMQEWYDRCSLSEFGISKRELLRSYFLAAATIFEPERTQERLLWAKTRILSKMITSFVNISGTTLSLDYNFNGLDEIISSANEDQGLAGTLLATFHQLLDGFDIYTLHQLKHVWSQWFMKVQQGEGSGGEDAVLLANTLNICAGLNEDVLSNNEYTALSTLTNKICNRLAQIQDNKILQVVDGSIKDKELEQDMQALVKLVLQENGGAVDRNIRHTFLSVSKTFYYDAYHDDETTDLHIFKVLFRPVV</sequence>
<accession>G8GJ95</accession>
<accession>J9PDV7</accession>
<reference key="1">
    <citation type="journal article" date="2012" name="J. Am. Chem. Soc.">
        <title>Toward a biosynthetic route to sclareol and amber odorants.</title>
        <authorList>
            <person name="Schalk M."/>
            <person name="Pastore L."/>
            <person name="Mirata M.A."/>
            <person name="Khim S."/>
            <person name="Schouwey M."/>
            <person name="Deguerry F."/>
            <person name="Pineda V."/>
            <person name="Rocci L."/>
            <person name="Daviet L."/>
        </authorList>
    </citation>
    <scope>NUCLEOTIDE SEQUENCE [MRNA]</scope>
    <scope>FUNCTION</scope>
    <scope>CATALYTIC ACTIVITY</scope>
    <scope>PATHWAY</scope>
    <scope>BIOTECHNOLOGY</scope>
    <source>
        <tissue>Flower</tissue>
        <tissue>Flower bud</tissue>
        <tissue>Leaf</tissue>
    </source>
</reference>
<reference key="2">
    <citation type="journal article" date="2013" name="Phytochemistry">
        <title>A diterpene synthase from the clary sage Salvia sclarea catalyzes the cyclization of geranylgeranyl diphosphate to (8R)-hydroxy-copalyl diphosphate.</title>
        <authorList>
            <person name="Guennewich N."/>
            <person name="Higashi Y."/>
            <person name="Feng X."/>
            <person name="Choi K.-B."/>
            <person name="Schmidt J."/>
            <person name="Kutchan T.M."/>
        </authorList>
    </citation>
    <scope>NUCLEOTIDE SEQUENCE [MRNA]</scope>
    <scope>FUNCTION</scope>
    <scope>CATALYTIC ACTIVITY</scope>
    <scope>PATHWAY</scope>
    <source>
        <strain>cv. Trakystra</strain>
        <tissue>Leaf</tissue>
        <tissue>Root</tissue>
        <tissue>Stem</tissue>
        <tissue>Trichome gland</tissue>
    </source>
</reference>
<reference key="3">
    <citation type="journal article" date="2019" name="Nat. Prod. Rep.">
        <title>Non-volatile natural products in plant glandular trichomes: chemistry, biological activities and biosynthesis.</title>
        <authorList>
            <person name="Liu Y."/>
            <person name="Jing S.-X."/>
            <person name="Luo S.-H."/>
            <person name="Li S.-H."/>
        </authorList>
    </citation>
    <scope>PATHWAY</scope>
    <scope>REVIEW</scope>
</reference>
<evidence type="ECO:0000250" key="1">
    <source>
        <dbReference type="UniProtKB" id="C7BKP9"/>
    </source>
</evidence>
<evidence type="ECO:0000250" key="2">
    <source>
        <dbReference type="UniProtKB" id="G8GJ96"/>
    </source>
</evidence>
<evidence type="ECO:0000250" key="3">
    <source>
        <dbReference type="UniProtKB" id="Q38802"/>
    </source>
</evidence>
<evidence type="ECO:0000255" key="4"/>
<evidence type="ECO:0000269" key="5">
    <source>
    </source>
</evidence>
<evidence type="ECO:0000269" key="6">
    <source>
    </source>
</evidence>
<evidence type="ECO:0000303" key="7">
    <source>
    </source>
</evidence>
<evidence type="ECO:0000303" key="8">
    <source>
    </source>
</evidence>
<evidence type="ECO:0000303" key="9">
    <source>
    </source>
</evidence>
<evidence type="ECO:0000305" key="10"/>
<evidence type="ECO:0000305" key="11">
    <source>
    </source>
</evidence>
<evidence type="ECO:0000305" key="12">
    <source>
    </source>
</evidence>
<evidence type="ECO:0000305" key="13">
    <source>
    </source>
</evidence>